<evidence type="ECO:0000250" key="1"/>
<evidence type="ECO:0000250" key="2">
    <source>
        <dbReference type="UniProtKB" id="P25382"/>
    </source>
</evidence>
<evidence type="ECO:0000250" key="3">
    <source>
        <dbReference type="UniProtKB" id="Q9NVX2"/>
    </source>
</evidence>
<evidence type="ECO:0000255" key="4"/>
<evidence type="ECO:0000305" key="5"/>
<accession>Q5RFF8</accession>
<name>NLE1_PONAB</name>
<keyword id="KW-0007">Acetylation</keyword>
<keyword id="KW-0914">Notch signaling pathway</keyword>
<keyword id="KW-0539">Nucleus</keyword>
<keyword id="KW-0597">Phosphoprotein</keyword>
<keyword id="KW-1185">Reference proteome</keyword>
<keyword id="KW-0677">Repeat</keyword>
<keyword id="KW-0853">WD repeat</keyword>
<proteinExistence type="evidence at transcript level"/>
<comment type="function">
    <text evidence="1">Plays a role in regulating Notch activity. Plays a role in regulating the expression of CDKN1A and several members of the Wnt pathway, probably via its effects on Notch activity. Required during embryogenesis for inner mass cell survival (By similarity).</text>
</comment>
<comment type="subunit">
    <text evidence="2 3">Associates with the pre-60S ribosomal particle. Interacts (via WD repeats) with uL18 (By similarity). Interacts (via UBL domain) with MDN1 (via VWFA/MIDAS domain) (By similarity).</text>
</comment>
<comment type="subcellular location">
    <subcellularLocation>
        <location evidence="1">Nucleus</location>
        <location evidence="1">Nucleolus</location>
    </subcellularLocation>
</comment>
<comment type="similarity">
    <text evidence="5">Belongs to the NLE1/RSA4 family.</text>
</comment>
<gene>
    <name type="primary">NLE1</name>
</gene>
<feature type="initiator methionine" description="Removed" evidence="3">
    <location>
        <position position="1"/>
    </location>
</feature>
<feature type="chain" id="PRO_0000051100" description="Notchless protein homolog 1">
    <location>
        <begin position="2"/>
        <end position="485"/>
    </location>
</feature>
<feature type="repeat" description="WD 1" evidence="4">
    <location>
        <begin position="112"/>
        <end position="151"/>
    </location>
</feature>
<feature type="repeat" description="WD 2" evidence="4">
    <location>
        <begin position="154"/>
        <end position="193"/>
    </location>
</feature>
<feature type="repeat" description="WD 3" evidence="4">
    <location>
        <begin position="197"/>
        <end position="241"/>
    </location>
</feature>
<feature type="repeat" description="WD 4" evidence="4">
    <location>
        <begin position="244"/>
        <end position="282"/>
    </location>
</feature>
<feature type="repeat" description="WD 5" evidence="4">
    <location>
        <begin position="325"/>
        <end position="366"/>
    </location>
</feature>
<feature type="repeat" description="WD 6" evidence="4">
    <location>
        <begin position="370"/>
        <end position="409"/>
    </location>
</feature>
<feature type="repeat" description="WD 7" evidence="4">
    <location>
        <begin position="412"/>
        <end position="451"/>
    </location>
</feature>
<feature type="repeat" description="WD 8" evidence="4">
    <location>
        <begin position="454"/>
        <end position="485"/>
    </location>
</feature>
<feature type="region of interest" description="Ubiquitin-like (UBL) domain" evidence="2">
    <location>
        <begin position="14"/>
        <end position="96"/>
    </location>
</feature>
<feature type="modified residue" description="N-acetylalanine" evidence="3">
    <location>
        <position position="2"/>
    </location>
</feature>
<feature type="modified residue" description="Phosphoserine" evidence="3">
    <location>
        <position position="79"/>
    </location>
</feature>
<protein>
    <recommendedName>
        <fullName>Notchless protein homolog 1</fullName>
    </recommendedName>
</protein>
<organism>
    <name type="scientific">Pongo abelii</name>
    <name type="common">Sumatran orangutan</name>
    <name type="synonym">Pongo pygmaeus abelii</name>
    <dbReference type="NCBI Taxonomy" id="9601"/>
    <lineage>
        <taxon>Eukaryota</taxon>
        <taxon>Metazoa</taxon>
        <taxon>Chordata</taxon>
        <taxon>Craniata</taxon>
        <taxon>Vertebrata</taxon>
        <taxon>Euteleostomi</taxon>
        <taxon>Mammalia</taxon>
        <taxon>Eutheria</taxon>
        <taxon>Euarchontoglires</taxon>
        <taxon>Primates</taxon>
        <taxon>Haplorrhini</taxon>
        <taxon>Catarrhini</taxon>
        <taxon>Hominidae</taxon>
        <taxon>Pongo</taxon>
    </lineage>
</organism>
<dbReference type="EMBL" id="CR857200">
    <property type="protein sequence ID" value="CAH89499.1"/>
    <property type="molecule type" value="mRNA"/>
</dbReference>
<dbReference type="RefSeq" id="NP_001124648.1">
    <property type="nucleotide sequence ID" value="NM_001131176.2"/>
</dbReference>
<dbReference type="SMR" id="Q5RFF8"/>
<dbReference type="FunCoup" id="Q5RFF8">
    <property type="interactions" value="1899"/>
</dbReference>
<dbReference type="STRING" id="9601.ENSPPYP00000009197"/>
<dbReference type="GeneID" id="100171489"/>
<dbReference type="KEGG" id="pon:100171489"/>
<dbReference type="CTD" id="54475"/>
<dbReference type="eggNOG" id="KOG0271">
    <property type="taxonomic scope" value="Eukaryota"/>
</dbReference>
<dbReference type="InParanoid" id="Q5RFF8"/>
<dbReference type="OrthoDB" id="10267436at2759"/>
<dbReference type="Proteomes" id="UP000001595">
    <property type="component" value="Unplaced"/>
</dbReference>
<dbReference type="GO" id="GO:0005730">
    <property type="term" value="C:nucleolus"/>
    <property type="evidence" value="ECO:0007669"/>
    <property type="project" value="UniProtKB-SubCell"/>
</dbReference>
<dbReference type="GO" id="GO:0007219">
    <property type="term" value="P:Notch signaling pathway"/>
    <property type="evidence" value="ECO:0007669"/>
    <property type="project" value="UniProtKB-KW"/>
</dbReference>
<dbReference type="GO" id="GO:0000027">
    <property type="term" value="P:ribosomal large subunit assembly"/>
    <property type="evidence" value="ECO:0007669"/>
    <property type="project" value="TreeGrafter"/>
</dbReference>
<dbReference type="CDD" id="cd00200">
    <property type="entry name" value="WD40"/>
    <property type="match status" value="1"/>
</dbReference>
<dbReference type="FunFam" id="2.130.10.10:FF:000129">
    <property type="entry name" value="Notchless homolog 1 (Drosophila)"/>
    <property type="match status" value="1"/>
</dbReference>
<dbReference type="Gene3D" id="2.130.10.10">
    <property type="entry name" value="YVTN repeat-like/Quinoprotein amine dehydrogenase"/>
    <property type="match status" value="1"/>
</dbReference>
<dbReference type="InterPro" id="IPR020472">
    <property type="entry name" value="G-protein_beta_WD-40_rep"/>
</dbReference>
<dbReference type="InterPro" id="IPR001632">
    <property type="entry name" value="Gprotein_B"/>
</dbReference>
<dbReference type="InterPro" id="IPR012972">
    <property type="entry name" value="NLE"/>
</dbReference>
<dbReference type="InterPro" id="IPR015943">
    <property type="entry name" value="WD40/YVTN_repeat-like_dom_sf"/>
</dbReference>
<dbReference type="InterPro" id="IPR019775">
    <property type="entry name" value="WD40_repeat_CS"/>
</dbReference>
<dbReference type="InterPro" id="IPR036322">
    <property type="entry name" value="WD40_repeat_dom_sf"/>
</dbReference>
<dbReference type="InterPro" id="IPR001680">
    <property type="entry name" value="WD40_rpt"/>
</dbReference>
<dbReference type="PANTHER" id="PTHR19848:SF0">
    <property type="entry name" value="NOTCHLESS PROTEIN HOMOLOG 1"/>
    <property type="match status" value="1"/>
</dbReference>
<dbReference type="PANTHER" id="PTHR19848">
    <property type="entry name" value="WD40 REPEAT PROTEIN"/>
    <property type="match status" value="1"/>
</dbReference>
<dbReference type="Pfam" id="PF08154">
    <property type="entry name" value="NLE"/>
    <property type="match status" value="1"/>
</dbReference>
<dbReference type="Pfam" id="PF00400">
    <property type="entry name" value="WD40"/>
    <property type="match status" value="7"/>
</dbReference>
<dbReference type="PRINTS" id="PR00319">
    <property type="entry name" value="GPROTEINB"/>
</dbReference>
<dbReference type="PRINTS" id="PR00320">
    <property type="entry name" value="GPROTEINBRPT"/>
</dbReference>
<dbReference type="SMART" id="SM00320">
    <property type="entry name" value="WD40"/>
    <property type="match status" value="8"/>
</dbReference>
<dbReference type="SUPFAM" id="SSF50978">
    <property type="entry name" value="WD40 repeat-like"/>
    <property type="match status" value="1"/>
</dbReference>
<dbReference type="PROSITE" id="PS00678">
    <property type="entry name" value="WD_REPEATS_1"/>
    <property type="match status" value="4"/>
</dbReference>
<dbReference type="PROSITE" id="PS50082">
    <property type="entry name" value="WD_REPEATS_2"/>
    <property type="match status" value="7"/>
</dbReference>
<dbReference type="PROSITE" id="PS50294">
    <property type="entry name" value="WD_REPEATS_REGION"/>
    <property type="match status" value="1"/>
</dbReference>
<sequence length="485" mass="53312">MAAAVADEAVARDVQRLLVQFQDEGGQLLGSPFDVPVDITPDRLQLVCNALLAQEDPLPLAFFVHDAEIISSLGKTLESQAVETEKVLDIIYQPQAIFRVRAVTRCTSSLEGHSEAVISVAFSPTGKYLASGSGDTTVRFWDLSTETPHFTCKGHRHWVLSISWSPDGKKLASGCKNGQILLWDPSTGKQVGRTLAGHSKWITGLSWEPLHANPECRYVASSSKDGSVRIWDTTAGRCERILTGHTQSVTCLRWGGDGLLYSASQDRTIKVWRAHDGVLCRTLQGHGHWVNTMALSTDYALRTGAFEPAEASVNPQDLQGSLQELKERALSRYNLMRGQGPERLVSGSDDFTLFLWSPAEDKKPLTRMTGHQALINQVLFSPDSRIVASASFDKSIKLWDGRTGKYLASLRGHVAAVYQIAWSADSRLLVSGSSDSTLKVWDVKAQKLAMDLPGHADEVYAVDWSPDGQRVASGGKDKCLRIWRR</sequence>
<reference key="1">
    <citation type="submission" date="2004-11" db="EMBL/GenBank/DDBJ databases">
        <authorList>
            <consortium name="The German cDNA consortium"/>
        </authorList>
    </citation>
    <scope>NUCLEOTIDE SEQUENCE [LARGE SCALE MRNA]</scope>
    <source>
        <tissue>Heart</tissue>
    </source>
</reference>